<reference key="1">
    <citation type="journal article" date="2001" name="Nature">
        <title>Complete genome sequence of Salmonella enterica serovar Typhimurium LT2.</title>
        <authorList>
            <person name="McClelland M."/>
            <person name="Sanderson K.E."/>
            <person name="Spieth J."/>
            <person name="Clifton S.W."/>
            <person name="Latreille P."/>
            <person name="Courtney L."/>
            <person name="Porwollik S."/>
            <person name="Ali J."/>
            <person name="Dante M."/>
            <person name="Du F."/>
            <person name="Hou S."/>
            <person name="Layman D."/>
            <person name="Leonard S."/>
            <person name="Nguyen C."/>
            <person name="Scott K."/>
            <person name="Holmes A."/>
            <person name="Grewal N."/>
            <person name="Mulvaney E."/>
            <person name="Ryan E."/>
            <person name="Sun H."/>
            <person name="Florea L."/>
            <person name="Miller W."/>
            <person name="Stoneking T."/>
            <person name="Nhan M."/>
            <person name="Waterston R."/>
            <person name="Wilson R.K."/>
        </authorList>
    </citation>
    <scope>NUCLEOTIDE SEQUENCE [LARGE SCALE GENOMIC DNA]</scope>
    <source>
        <strain>LT2 / SGSC1412 / ATCC 700720</strain>
    </source>
</reference>
<feature type="chain" id="PRO_0000193072" description="Crotonobetaine/carnitine--CoA ligase">
    <location>
        <begin position="1"/>
        <end position="517"/>
    </location>
</feature>
<sequence length="517" mass="58488">MDIVGGQNLRQMWDDLAGVYGDKTALIFESCEGIVRQFSYASLNEEINRTANLFYSLGIRKGDRVALHLDNCPEFIFCWFGLAKIGAIMVPINARLLGEESAWILQNSQVSLLVTSAQFYPMYREIRQDNSTPLNHICLIGEQLPADDGVSHFTQLQARQSATLCYTPVLSTDDTAEILFTSGTTSRPKGVVITHYNLRFAGYYSAWQIALRDDDVYMTVMPAFHIDCQCTAAMPAFSAGSTFVLLEKYSARAFWDQVRKYQATVTECIPMMIRTLMVQPAAPTDRQHHLREVMFYLNLSEQEKDDFTERFGVRLLTSYGMTETIVGIIGDRPGDKRRWPSIGRVGFSYEAEIRDDQNRPLPAGEIGEICIKGIPGKTIFKEYYMQPEATAKALEPEGWLHTGDSGYQDEDGYFYFVDRRCNMIKRGGENVSCVELENIISAHPKIQDIVVVGIKDAIRDEAIKAFIVLNEGETLSEAEFFSFCENNMAKFKVPSFMEIRTDLPRNCSGKIIKKNLK</sequence>
<keyword id="KW-0436">Ligase</keyword>
<keyword id="KW-1185">Reference proteome</keyword>
<dbReference type="EC" id="6.2.1.48" evidence="1"/>
<dbReference type="EMBL" id="AE006468">
    <property type="protein sequence ID" value="AAL19035.1"/>
    <property type="molecule type" value="Genomic_DNA"/>
</dbReference>
<dbReference type="RefSeq" id="NP_459076.1">
    <property type="nucleotide sequence ID" value="NC_003197.2"/>
</dbReference>
<dbReference type="RefSeq" id="WP_000355806.1">
    <property type="nucleotide sequence ID" value="NC_003197.2"/>
</dbReference>
<dbReference type="SMR" id="Q8ZRX4"/>
<dbReference type="STRING" id="99287.STM0071"/>
<dbReference type="PaxDb" id="99287-STM0071"/>
<dbReference type="GeneID" id="1251589"/>
<dbReference type="KEGG" id="stm:STM0071"/>
<dbReference type="PATRIC" id="fig|99287.12.peg.73"/>
<dbReference type="HOGENOM" id="CLU_000022_59_0_6"/>
<dbReference type="OMA" id="YIMPKFD"/>
<dbReference type="PhylomeDB" id="Q8ZRX4"/>
<dbReference type="BioCyc" id="SENT99287:STM0071-MONOMER"/>
<dbReference type="UniPathway" id="UPA00117"/>
<dbReference type="Proteomes" id="UP000001014">
    <property type="component" value="Chromosome"/>
</dbReference>
<dbReference type="GO" id="GO:0016878">
    <property type="term" value="F:acid-thiol ligase activity"/>
    <property type="evidence" value="ECO:0007669"/>
    <property type="project" value="InterPro"/>
</dbReference>
<dbReference type="GO" id="GO:0051108">
    <property type="term" value="F:carnitine-CoA ligase activity"/>
    <property type="evidence" value="ECO:0000318"/>
    <property type="project" value="GO_Central"/>
</dbReference>
<dbReference type="GO" id="GO:0051109">
    <property type="term" value="F:crotonobetaine-CoA ligase activity"/>
    <property type="evidence" value="ECO:0000318"/>
    <property type="project" value="GO_Central"/>
</dbReference>
<dbReference type="GO" id="GO:0009437">
    <property type="term" value="P:carnitine metabolic process"/>
    <property type="evidence" value="ECO:0007669"/>
    <property type="project" value="UniProtKB-UniRule"/>
</dbReference>
<dbReference type="CDD" id="cd05934">
    <property type="entry name" value="FACL_DitJ_like"/>
    <property type="match status" value="1"/>
</dbReference>
<dbReference type="FunFam" id="3.30.300.30:FF:000011">
    <property type="entry name" value="Crotonobetaine/carnitine--CoA ligase"/>
    <property type="match status" value="1"/>
</dbReference>
<dbReference type="Gene3D" id="3.30.300.30">
    <property type="match status" value="1"/>
</dbReference>
<dbReference type="Gene3D" id="3.40.50.12780">
    <property type="entry name" value="N-terminal domain of ligase-like"/>
    <property type="match status" value="1"/>
</dbReference>
<dbReference type="HAMAP" id="MF_01524">
    <property type="entry name" value="CaiC"/>
    <property type="match status" value="1"/>
</dbReference>
<dbReference type="InterPro" id="IPR025110">
    <property type="entry name" value="AMP-bd_C"/>
</dbReference>
<dbReference type="InterPro" id="IPR045851">
    <property type="entry name" value="AMP-bd_C_sf"/>
</dbReference>
<dbReference type="InterPro" id="IPR020845">
    <property type="entry name" value="AMP-binding_CS"/>
</dbReference>
<dbReference type="InterPro" id="IPR000873">
    <property type="entry name" value="AMP-dep_synth/lig_dom"/>
</dbReference>
<dbReference type="InterPro" id="IPR042099">
    <property type="entry name" value="ANL_N_sf"/>
</dbReference>
<dbReference type="InterPro" id="IPR023456">
    <property type="entry name" value="CaiC"/>
</dbReference>
<dbReference type="NCBIfam" id="NF005947">
    <property type="entry name" value="PRK08008.1"/>
    <property type="match status" value="1"/>
</dbReference>
<dbReference type="PANTHER" id="PTHR43201">
    <property type="entry name" value="ACYL-COA SYNTHETASE"/>
    <property type="match status" value="1"/>
</dbReference>
<dbReference type="PANTHER" id="PTHR43201:SF5">
    <property type="entry name" value="MEDIUM-CHAIN ACYL-COA LIGASE ACSF2, MITOCHONDRIAL"/>
    <property type="match status" value="1"/>
</dbReference>
<dbReference type="Pfam" id="PF00501">
    <property type="entry name" value="AMP-binding"/>
    <property type="match status" value="1"/>
</dbReference>
<dbReference type="Pfam" id="PF13193">
    <property type="entry name" value="AMP-binding_C"/>
    <property type="match status" value="1"/>
</dbReference>
<dbReference type="SUPFAM" id="SSF56801">
    <property type="entry name" value="Acetyl-CoA synthetase-like"/>
    <property type="match status" value="1"/>
</dbReference>
<dbReference type="PROSITE" id="PS00455">
    <property type="entry name" value="AMP_BINDING"/>
    <property type="match status" value="1"/>
</dbReference>
<organism>
    <name type="scientific">Salmonella typhimurium (strain LT2 / SGSC1412 / ATCC 700720)</name>
    <dbReference type="NCBI Taxonomy" id="99287"/>
    <lineage>
        <taxon>Bacteria</taxon>
        <taxon>Pseudomonadati</taxon>
        <taxon>Pseudomonadota</taxon>
        <taxon>Gammaproteobacteria</taxon>
        <taxon>Enterobacterales</taxon>
        <taxon>Enterobacteriaceae</taxon>
        <taxon>Salmonella</taxon>
    </lineage>
</organism>
<comment type="function">
    <text evidence="1">Catalyzes the transfer of CoA to carnitine, generating the initial carnitinyl-CoA needed for the CaiB reaction cycle. Also has activity toward crotonobetaine and gamma-butyrobetaine.</text>
</comment>
<comment type="catalytic activity">
    <reaction evidence="1">
        <text>4-(trimethylamino)butanoate + ATP + CoA = 4-(trimethylamino)butanoyl-CoA + AMP + diphosphate</text>
        <dbReference type="Rhea" id="RHEA:55960"/>
        <dbReference type="ChEBI" id="CHEBI:16244"/>
        <dbReference type="ChEBI" id="CHEBI:30616"/>
        <dbReference type="ChEBI" id="CHEBI:33019"/>
        <dbReference type="ChEBI" id="CHEBI:57287"/>
        <dbReference type="ChEBI" id="CHEBI:61513"/>
        <dbReference type="ChEBI" id="CHEBI:456215"/>
        <dbReference type="EC" id="6.2.1.48"/>
    </reaction>
</comment>
<comment type="catalytic activity">
    <reaction evidence="1">
        <text>crotonobetaine + ATP + CoA = crotonobetainyl-CoA + AMP + diphosphate</text>
        <dbReference type="Rhea" id="RHEA:30079"/>
        <dbReference type="ChEBI" id="CHEBI:17237"/>
        <dbReference type="ChEBI" id="CHEBI:30616"/>
        <dbReference type="ChEBI" id="CHEBI:33019"/>
        <dbReference type="ChEBI" id="CHEBI:57287"/>
        <dbReference type="ChEBI" id="CHEBI:60933"/>
        <dbReference type="ChEBI" id="CHEBI:456215"/>
        <dbReference type="EC" id="6.2.1.48"/>
    </reaction>
</comment>
<comment type="catalytic activity">
    <reaction evidence="1">
        <text>(R)-carnitine + ATP + CoA = (R)-carnitinyl-CoA + AMP + diphosphate</text>
        <dbReference type="Rhea" id="RHEA:28514"/>
        <dbReference type="ChEBI" id="CHEBI:16347"/>
        <dbReference type="ChEBI" id="CHEBI:30616"/>
        <dbReference type="ChEBI" id="CHEBI:33019"/>
        <dbReference type="ChEBI" id="CHEBI:57287"/>
        <dbReference type="ChEBI" id="CHEBI:60932"/>
        <dbReference type="ChEBI" id="CHEBI:456215"/>
        <dbReference type="EC" id="6.2.1.48"/>
    </reaction>
</comment>
<comment type="pathway">
    <text evidence="1">Amine and polyamine metabolism; carnitine metabolism.</text>
</comment>
<comment type="similarity">
    <text evidence="1">Belongs to the ATP-dependent AMP-binding enzyme family.</text>
</comment>
<evidence type="ECO:0000255" key="1">
    <source>
        <dbReference type="HAMAP-Rule" id="MF_01524"/>
    </source>
</evidence>
<protein>
    <recommendedName>
        <fullName evidence="1">Crotonobetaine/carnitine--CoA ligase</fullName>
        <ecNumber evidence="1">6.2.1.48</ecNumber>
    </recommendedName>
</protein>
<name>CAIC_SALTY</name>
<accession>Q8ZRX4</accession>
<gene>
    <name evidence="1" type="primary">caiC</name>
    <name type="ordered locus">STM0071</name>
</gene>
<proteinExistence type="inferred from homology"/>